<protein>
    <recommendedName>
        <fullName>Prolactin</fullName>
        <shortName>PRL</shortName>
    </recommendedName>
</protein>
<dbReference type="EMBL" id="AY161285">
    <property type="protein sequence ID" value="AAN78320.1"/>
    <property type="molecule type" value="mRNA"/>
</dbReference>
<dbReference type="RefSeq" id="NP_001291863.1">
    <property type="nucleotide sequence ID" value="NM_001304934.1"/>
</dbReference>
<dbReference type="SMR" id="Q8HXS1"/>
<dbReference type="FunCoup" id="Q8HXS1">
    <property type="interactions" value="16"/>
</dbReference>
<dbReference type="STRING" id="9646.ENSAMEP00000011769"/>
<dbReference type="Ensembl" id="ENSAMET00000031918.1">
    <property type="protein sequence ID" value="ENSAMEP00000026858.1"/>
    <property type="gene ID" value="ENSAMEG00000011161.2"/>
</dbReference>
<dbReference type="GeneID" id="100481524"/>
<dbReference type="KEGG" id="aml:100481524"/>
<dbReference type="CTD" id="5617"/>
<dbReference type="eggNOG" id="ENOG502QYU3">
    <property type="taxonomic scope" value="Eukaryota"/>
</dbReference>
<dbReference type="GeneTree" id="ENSGT00950000182818"/>
<dbReference type="HOGENOM" id="CLU_088274_0_1_1"/>
<dbReference type="InParanoid" id="Q8HXS1"/>
<dbReference type="OMA" id="EVYSRWS"/>
<dbReference type="OrthoDB" id="9946219at2759"/>
<dbReference type="TreeFam" id="TF332592"/>
<dbReference type="Proteomes" id="UP000008912">
    <property type="component" value="Unassembled WGS sequence"/>
</dbReference>
<dbReference type="GO" id="GO:0005615">
    <property type="term" value="C:extracellular space"/>
    <property type="evidence" value="ECO:0007669"/>
    <property type="project" value="TreeGrafter"/>
</dbReference>
<dbReference type="GO" id="GO:0005179">
    <property type="term" value="F:hormone activity"/>
    <property type="evidence" value="ECO:0007669"/>
    <property type="project" value="UniProtKB-KW"/>
</dbReference>
<dbReference type="GO" id="GO:0005148">
    <property type="term" value="F:prolactin receptor binding"/>
    <property type="evidence" value="ECO:0007669"/>
    <property type="project" value="TreeGrafter"/>
</dbReference>
<dbReference type="GO" id="GO:0007565">
    <property type="term" value="P:female pregnancy"/>
    <property type="evidence" value="ECO:0007669"/>
    <property type="project" value="TreeGrafter"/>
</dbReference>
<dbReference type="GO" id="GO:0007595">
    <property type="term" value="P:lactation"/>
    <property type="evidence" value="ECO:0007669"/>
    <property type="project" value="UniProtKB-KW"/>
</dbReference>
<dbReference type="GO" id="GO:0001937">
    <property type="term" value="P:negative regulation of endothelial cell proliferation"/>
    <property type="evidence" value="ECO:0007669"/>
    <property type="project" value="Ensembl"/>
</dbReference>
<dbReference type="GO" id="GO:0043123">
    <property type="term" value="P:positive regulation of canonical NF-kappaB signal transduction"/>
    <property type="evidence" value="ECO:0007669"/>
    <property type="project" value="Ensembl"/>
</dbReference>
<dbReference type="GO" id="GO:0008284">
    <property type="term" value="P:positive regulation of cell population proliferation"/>
    <property type="evidence" value="ECO:0007669"/>
    <property type="project" value="TreeGrafter"/>
</dbReference>
<dbReference type="GO" id="GO:1903489">
    <property type="term" value="P:positive regulation of lactation"/>
    <property type="evidence" value="ECO:0007669"/>
    <property type="project" value="TreeGrafter"/>
</dbReference>
<dbReference type="GO" id="GO:1902895">
    <property type="term" value="P:positive regulation of miRNA transcription"/>
    <property type="evidence" value="ECO:0007669"/>
    <property type="project" value="Ensembl"/>
</dbReference>
<dbReference type="GO" id="GO:0046427">
    <property type="term" value="P:positive regulation of receptor signaling pathway via JAK-STAT"/>
    <property type="evidence" value="ECO:0007669"/>
    <property type="project" value="Ensembl"/>
</dbReference>
<dbReference type="GO" id="GO:0038161">
    <property type="term" value="P:prolactin signaling pathway"/>
    <property type="evidence" value="ECO:0007669"/>
    <property type="project" value="Ensembl"/>
</dbReference>
<dbReference type="GO" id="GO:0031667">
    <property type="term" value="P:response to nutrient levels"/>
    <property type="evidence" value="ECO:0007669"/>
    <property type="project" value="TreeGrafter"/>
</dbReference>
<dbReference type="CDD" id="cd10288">
    <property type="entry name" value="prolactin_like"/>
    <property type="match status" value="1"/>
</dbReference>
<dbReference type="FunFam" id="1.20.1250.10:FF:000003">
    <property type="entry name" value="Prolactin"/>
    <property type="match status" value="1"/>
</dbReference>
<dbReference type="Gene3D" id="1.20.1250.10">
    <property type="match status" value="1"/>
</dbReference>
<dbReference type="InterPro" id="IPR009079">
    <property type="entry name" value="4_helix_cytokine-like_core"/>
</dbReference>
<dbReference type="InterPro" id="IPR001400">
    <property type="entry name" value="Somatotropin/Prolactin"/>
</dbReference>
<dbReference type="InterPro" id="IPR018116">
    <property type="entry name" value="Somatotropin_CS"/>
</dbReference>
<dbReference type="PANTHER" id="PTHR11417:SF5">
    <property type="entry name" value="PROLACTIN"/>
    <property type="match status" value="1"/>
</dbReference>
<dbReference type="PANTHER" id="PTHR11417">
    <property type="entry name" value="SOMATOTROPIN,PROLACTIN"/>
    <property type="match status" value="1"/>
</dbReference>
<dbReference type="Pfam" id="PF00103">
    <property type="entry name" value="Hormone_1"/>
    <property type="match status" value="1"/>
</dbReference>
<dbReference type="PRINTS" id="PR00836">
    <property type="entry name" value="SOMATOTROPIN"/>
</dbReference>
<dbReference type="SUPFAM" id="SSF47266">
    <property type="entry name" value="4-helical cytokines"/>
    <property type="match status" value="1"/>
</dbReference>
<dbReference type="PROSITE" id="PS00266">
    <property type="entry name" value="SOMATOTROPIN_1"/>
    <property type="match status" value="1"/>
</dbReference>
<dbReference type="PROSITE" id="PS00338">
    <property type="entry name" value="SOMATOTROPIN_2"/>
    <property type="match status" value="1"/>
</dbReference>
<organism>
    <name type="scientific">Ailuropoda melanoleuca</name>
    <name type="common">Giant panda</name>
    <dbReference type="NCBI Taxonomy" id="9646"/>
    <lineage>
        <taxon>Eukaryota</taxon>
        <taxon>Metazoa</taxon>
        <taxon>Chordata</taxon>
        <taxon>Craniata</taxon>
        <taxon>Vertebrata</taxon>
        <taxon>Euteleostomi</taxon>
        <taxon>Mammalia</taxon>
        <taxon>Eutheria</taxon>
        <taxon>Laurasiatheria</taxon>
        <taxon>Carnivora</taxon>
        <taxon>Caniformia</taxon>
        <taxon>Ursidae</taxon>
        <taxon>Ailuropoda</taxon>
    </lineage>
</organism>
<gene>
    <name type="primary">PRL</name>
</gene>
<proteinExistence type="evidence at transcript level"/>
<name>PRL_AILME</name>
<reference key="1">
    <citation type="journal article" date="2004" name="Yi Chuan Xue Bao">
        <title>Cloning and expression of pituitary prolactin gene in Ailuropoda melanoleuca.</title>
        <authorList>
            <person name="Zheng X."/>
            <person name="Zhang Z.H."/>
            <person name="Hu X.L."/>
            <person name="Liao M.J."/>
            <person name="Zhang A.J."/>
            <person name="Zhu M.Y."/>
        </authorList>
    </citation>
    <scope>NUCLEOTIDE SEQUENCE [MRNA]</scope>
    <source>
        <tissue>Pituitary</tissue>
    </source>
</reference>
<keyword id="KW-1015">Disulfide bond</keyword>
<keyword id="KW-0372">Hormone</keyword>
<keyword id="KW-0421">Lactation</keyword>
<keyword id="KW-0597">Phosphoprotein</keyword>
<keyword id="KW-1185">Reference proteome</keyword>
<keyword id="KW-0964">Secreted</keyword>
<keyword id="KW-0732">Signal</keyword>
<sequence>MDKKGWSLKGSLLPLLLLVSDLLLCQSVASLPICPTGAVNCQVSLRDLFDRAVILSHYIHNLSSEMFNEFDKRYAQGRGFITKAINSCHTSSLSTPEDKEQAQQIHHEDLLNLILRVLRSWNDPLYHLVTEVRGMQEAPDSILSRAIEIEEQNRRLLEGMEKIVGQVHPGVRENEVYSVWSGLPSLQMADEDTRLFAFYNLLHCLRRDSHKIDNYLKLLKCRIVYDSNC</sequence>
<feature type="signal peptide" evidence="1">
    <location>
        <begin position="1"/>
        <end position="30"/>
    </location>
</feature>
<feature type="chain" id="PRO_0000032910" description="Prolactin">
    <location>
        <begin position="31"/>
        <end position="229"/>
    </location>
</feature>
<feature type="modified residue" description="Phosphoserine" evidence="3">
    <location>
        <position position="56"/>
    </location>
</feature>
<feature type="modified residue" description="Phosphoserine" evidence="3">
    <location>
        <position position="64"/>
    </location>
</feature>
<feature type="modified residue" description="Phosphoserine" evidence="3">
    <location>
        <position position="120"/>
    </location>
</feature>
<feature type="disulfide bond" evidence="1">
    <location>
        <begin position="34"/>
        <end position="41"/>
    </location>
</feature>
<feature type="disulfide bond" evidence="1">
    <location>
        <begin position="88"/>
        <end position="204"/>
    </location>
</feature>
<feature type="disulfide bond" evidence="1">
    <location>
        <begin position="221"/>
        <end position="229"/>
    </location>
</feature>
<accession>Q8HXS1</accession>
<comment type="function">
    <text>Prolactin acts primarily on the mammary gland by promoting lactation.</text>
</comment>
<comment type="subunit">
    <text evidence="2">Interacts with PRLR.</text>
</comment>
<comment type="subcellular location">
    <subcellularLocation>
        <location>Secreted</location>
    </subcellularLocation>
</comment>
<comment type="similarity">
    <text evidence="4">Belongs to the somatotropin/prolactin family.</text>
</comment>
<evidence type="ECO:0000250" key="1"/>
<evidence type="ECO:0000250" key="2">
    <source>
        <dbReference type="UniProtKB" id="P01236"/>
    </source>
</evidence>
<evidence type="ECO:0000250" key="3">
    <source>
        <dbReference type="UniProtKB" id="P01239"/>
    </source>
</evidence>
<evidence type="ECO:0000305" key="4"/>